<proteinExistence type="inferred from homology"/>
<accession>A2XZR3</accession>
<keyword id="KW-0217">Developmental protein</keyword>
<keyword id="KW-0238">DNA-binding</keyword>
<keyword id="KW-0371">Homeobox</keyword>
<keyword id="KW-0539">Nucleus</keyword>
<keyword id="KW-1185">Reference proteome</keyword>
<keyword id="KW-0804">Transcription</keyword>
<keyword id="KW-0805">Transcription regulation</keyword>
<dbReference type="EMBL" id="CM000130">
    <property type="protein sequence ID" value="EAY96323.1"/>
    <property type="molecule type" value="Genomic_DNA"/>
</dbReference>
<dbReference type="SMR" id="A2XZR3"/>
<dbReference type="STRING" id="39946.A2XZR3"/>
<dbReference type="EnsemblPlants" id="BGIOSGA019069-TA">
    <property type="protein sequence ID" value="BGIOSGA019069-PA"/>
    <property type="gene ID" value="BGIOSGA019069"/>
</dbReference>
<dbReference type="Gramene" id="BGIOSGA019069-TA">
    <property type="protein sequence ID" value="BGIOSGA019069-PA"/>
    <property type="gene ID" value="BGIOSGA019069"/>
</dbReference>
<dbReference type="HOGENOM" id="CLU_070454_1_0_1"/>
<dbReference type="OMA" id="PSRCVGA"/>
<dbReference type="Proteomes" id="UP000007015">
    <property type="component" value="Chromosome 5"/>
</dbReference>
<dbReference type="GO" id="GO:0005634">
    <property type="term" value="C:nucleus"/>
    <property type="evidence" value="ECO:0007669"/>
    <property type="project" value="UniProtKB-SubCell"/>
</dbReference>
<dbReference type="GO" id="GO:0003677">
    <property type="term" value="F:DNA binding"/>
    <property type="evidence" value="ECO:0007669"/>
    <property type="project" value="UniProtKB-KW"/>
</dbReference>
<dbReference type="GO" id="GO:0003700">
    <property type="term" value="F:DNA-binding transcription factor activity"/>
    <property type="evidence" value="ECO:0007669"/>
    <property type="project" value="InterPro"/>
</dbReference>
<dbReference type="GO" id="GO:0099402">
    <property type="term" value="P:plant organ development"/>
    <property type="evidence" value="ECO:0007669"/>
    <property type="project" value="InterPro"/>
</dbReference>
<dbReference type="CDD" id="cd00086">
    <property type="entry name" value="homeodomain"/>
    <property type="match status" value="1"/>
</dbReference>
<dbReference type="FunFam" id="1.10.10.60:FF:000146">
    <property type="entry name" value="WUSCHEL-related homeobox 4"/>
    <property type="match status" value="1"/>
</dbReference>
<dbReference type="Gene3D" id="1.10.10.60">
    <property type="entry name" value="Homeodomain-like"/>
    <property type="match status" value="1"/>
</dbReference>
<dbReference type="InterPro" id="IPR001356">
    <property type="entry name" value="HD"/>
</dbReference>
<dbReference type="InterPro" id="IPR009057">
    <property type="entry name" value="Homeodomain-like_sf"/>
</dbReference>
<dbReference type="InterPro" id="IPR044555">
    <property type="entry name" value="WUSCHEL-like"/>
</dbReference>
<dbReference type="PANTHER" id="PTHR45940">
    <property type="entry name" value="WUSCHEL-RELATED HOMEOBOX 1-RELATED"/>
    <property type="match status" value="1"/>
</dbReference>
<dbReference type="PANTHER" id="PTHR45940:SF46">
    <property type="entry name" value="WUSCHEL-RELATED HOMEOBOX 2-RELATED"/>
    <property type="match status" value="1"/>
</dbReference>
<dbReference type="Pfam" id="PF00046">
    <property type="entry name" value="Homeodomain"/>
    <property type="match status" value="1"/>
</dbReference>
<dbReference type="SMART" id="SM00389">
    <property type="entry name" value="HOX"/>
    <property type="match status" value="1"/>
</dbReference>
<dbReference type="SUPFAM" id="SSF46689">
    <property type="entry name" value="Homeodomain-like"/>
    <property type="match status" value="1"/>
</dbReference>
<dbReference type="PROSITE" id="PS50071">
    <property type="entry name" value="HOMEOBOX_2"/>
    <property type="match status" value="1"/>
</dbReference>
<protein>
    <recommendedName>
        <fullName>Putative WUSCHEL-related homeobox 2</fullName>
    </recommendedName>
    <alternativeName>
        <fullName>OsWOX2</fullName>
    </alternativeName>
</protein>
<comment type="function">
    <text evidence="1">Transcription factor which may be involved in developmental processes.</text>
</comment>
<comment type="subcellular location">
    <subcellularLocation>
        <location evidence="2">Nucleus</location>
    </subcellularLocation>
</comment>
<comment type="similarity">
    <text evidence="4">Belongs to the WUS homeobox family.</text>
</comment>
<gene>
    <name type="primary">WOX2</name>
    <name type="ORF">OsI_017556</name>
</gene>
<evidence type="ECO:0000250" key="1"/>
<evidence type="ECO:0000255" key="2">
    <source>
        <dbReference type="PROSITE-ProRule" id="PRU00108"/>
    </source>
</evidence>
<evidence type="ECO:0000256" key="3">
    <source>
        <dbReference type="SAM" id="MobiDB-lite"/>
    </source>
</evidence>
<evidence type="ECO:0000305" key="4"/>
<feature type="chain" id="PRO_0000308634" description="Putative WUSCHEL-related homeobox 2">
    <location>
        <begin position="1"/>
        <end position="286"/>
    </location>
</feature>
<feature type="DNA-binding region" description="Homeobox; WUS-type" evidence="2">
    <location>
        <begin position="23"/>
        <end position="87"/>
    </location>
</feature>
<feature type="region of interest" description="Disordered" evidence="3">
    <location>
        <begin position="1"/>
        <end position="25"/>
    </location>
</feature>
<feature type="region of interest" description="Disordered" evidence="3">
    <location>
        <begin position="128"/>
        <end position="152"/>
    </location>
</feature>
<reference key="1">
    <citation type="journal article" date="2005" name="PLoS Biol.">
        <title>The genomes of Oryza sativa: a history of duplications.</title>
        <authorList>
            <person name="Yu J."/>
            <person name="Wang J."/>
            <person name="Lin W."/>
            <person name="Li S."/>
            <person name="Li H."/>
            <person name="Zhou J."/>
            <person name="Ni P."/>
            <person name="Dong W."/>
            <person name="Hu S."/>
            <person name="Zeng C."/>
            <person name="Zhang J."/>
            <person name="Zhang Y."/>
            <person name="Li R."/>
            <person name="Xu Z."/>
            <person name="Li S."/>
            <person name="Li X."/>
            <person name="Zheng H."/>
            <person name="Cong L."/>
            <person name="Lin L."/>
            <person name="Yin J."/>
            <person name="Geng J."/>
            <person name="Li G."/>
            <person name="Shi J."/>
            <person name="Liu J."/>
            <person name="Lv H."/>
            <person name="Li J."/>
            <person name="Wang J."/>
            <person name="Deng Y."/>
            <person name="Ran L."/>
            <person name="Shi X."/>
            <person name="Wang X."/>
            <person name="Wu Q."/>
            <person name="Li C."/>
            <person name="Ren X."/>
            <person name="Wang J."/>
            <person name="Wang X."/>
            <person name="Li D."/>
            <person name="Liu D."/>
            <person name="Zhang X."/>
            <person name="Ji Z."/>
            <person name="Zhao W."/>
            <person name="Sun Y."/>
            <person name="Zhang Z."/>
            <person name="Bao J."/>
            <person name="Han Y."/>
            <person name="Dong L."/>
            <person name="Ji J."/>
            <person name="Chen P."/>
            <person name="Wu S."/>
            <person name="Liu J."/>
            <person name="Xiao Y."/>
            <person name="Bu D."/>
            <person name="Tan J."/>
            <person name="Yang L."/>
            <person name="Ye C."/>
            <person name="Zhang J."/>
            <person name="Xu J."/>
            <person name="Zhou Y."/>
            <person name="Yu Y."/>
            <person name="Zhang B."/>
            <person name="Zhuang S."/>
            <person name="Wei H."/>
            <person name="Liu B."/>
            <person name="Lei M."/>
            <person name="Yu H."/>
            <person name="Li Y."/>
            <person name="Xu H."/>
            <person name="Wei S."/>
            <person name="He X."/>
            <person name="Fang L."/>
            <person name="Zhang Z."/>
            <person name="Zhang Y."/>
            <person name="Huang X."/>
            <person name="Su Z."/>
            <person name="Tong W."/>
            <person name="Li J."/>
            <person name="Tong Z."/>
            <person name="Li S."/>
            <person name="Ye J."/>
            <person name="Wang L."/>
            <person name="Fang L."/>
            <person name="Lei T."/>
            <person name="Chen C.-S."/>
            <person name="Chen H.-C."/>
            <person name="Xu Z."/>
            <person name="Li H."/>
            <person name="Huang H."/>
            <person name="Zhang F."/>
            <person name="Xu H."/>
            <person name="Li N."/>
            <person name="Zhao C."/>
            <person name="Li S."/>
            <person name="Dong L."/>
            <person name="Huang Y."/>
            <person name="Li L."/>
            <person name="Xi Y."/>
            <person name="Qi Q."/>
            <person name="Li W."/>
            <person name="Zhang B."/>
            <person name="Hu W."/>
            <person name="Zhang Y."/>
            <person name="Tian X."/>
            <person name="Jiao Y."/>
            <person name="Liang X."/>
            <person name="Jin J."/>
            <person name="Gao L."/>
            <person name="Zheng W."/>
            <person name="Hao B."/>
            <person name="Liu S.-M."/>
            <person name="Wang W."/>
            <person name="Yuan L."/>
            <person name="Cao M."/>
            <person name="McDermott J."/>
            <person name="Samudrala R."/>
            <person name="Wang J."/>
            <person name="Wong G.K.-S."/>
            <person name="Yang H."/>
        </authorList>
    </citation>
    <scope>NUCLEOTIDE SEQUENCE [LARGE SCALE GENOMIC DNA]</scope>
    <source>
        <strain>cv. 93-11</strain>
    </source>
</reference>
<reference key="2">
    <citation type="journal article" date="2007" name="Plant Physiol.">
        <title>A WUSCHEL-LIKE HOMEOBOX gene represses a YABBY gene expression required for rice leaf development.</title>
        <authorList>
            <person name="Dai M."/>
            <person name="Hu Y."/>
            <person name="Zhao Y."/>
            <person name="Liu H."/>
            <person name="Zhou D.-X."/>
        </authorList>
    </citation>
    <scope>NOMENCLATURE</scope>
</reference>
<sequence>MAPAVQQQQSGGGGGSTGAAAVGSTTRWCPTPEQLMMLEEMYRGGLRTPNAAQIQQITAHLSTYGRIEGKNVFYWFQNHKARDRQKLRRRLCISHHLLSCAHYYHHHLAAAAAVVPTTKLLTTLNPSSSSSSCGGGLNEDANSLLSPTSPTTPTSAAAAAAAAAYTTSYYYPFTAAAAPPPPRTSPAASPLFHYNQGGGGVVLPAAEAIGRSSSSSDYSLGKLVDNFGVALEETFPAQPQQPATTMAMTAVVDTTAVAAAAGGFCRPLKTLDLFPGGLKEEQHDVV</sequence>
<name>WOX2_ORYSI</name>
<organism>
    <name type="scientific">Oryza sativa subsp. indica</name>
    <name type="common">Rice</name>
    <dbReference type="NCBI Taxonomy" id="39946"/>
    <lineage>
        <taxon>Eukaryota</taxon>
        <taxon>Viridiplantae</taxon>
        <taxon>Streptophyta</taxon>
        <taxon>Embryophyta</taxon>
        <taxon>Tracheophyta</taxon>
        <taxon>Spermatophyta</taxon>
        <taxon>Magnoliopsida</taxon>
        <taxon>Liliopsida</taxon>
        <taxon>Poales</taxon>
        <taxon>Poaceae</taxon>
        <taxon>BOP clade</taxon>
        <taxon>Oryzoideae</taxon>
        <taxon>Oryzeae</taxon>
        <taxon>Oryzinae</taxon>
        <taxon>Oryza</taxon>
        <taxon>Oryza sativa</taxon>
    </lineage>
</organism>